<sequence length="327" mass="33900">MTHSLRVIFAGTPEFAAAALAAIHEAGFPVPLVLTQPDRPAGRGMKLQASAVKRYALERGMAVAQPPSLRRAGKYPAEAVAALDLLHATPHDVMVVAAYGLLLPQEVLELPRHGCINIHASLLPRWRGAAPIHRAIEAGDAETGVTLMQMDAGLDTGAMLHEARVAIAPDDTTATLHDKLAAAGARLVVDALVELERTGALAATPQPADGVTYAEKIGKHEAALDWRKPAAALARQVRAFDPFPGGAGTLDGATLKLWAADAVPGRDDAAPGTIVDIGPDGVVIACGEGALRVTQLQKPGGKRLPAREFLAGAPLAVGQRFAPADAA</sequence>
<proteinExistence type="inferred from homology"/>
<accession>A3N4D4</accession>
<evidence type="ECO:0000255" key="1">
    <source>
        <dbReference type="HAMAP-Rule" id="MF_00182"/>
    </source>
</evidence>
<protein>
    <recommendedName>
        <fullName evidence="1">Methionyl-tRNA formyltransferase</fullName>
        <ecNumber evidence="1">2.1.2.9</ecNumber>
    </recommendedName>
</protein>
<comment type="function">
    <text evidence="1">Attaches a formyl group to the free amino group of methionyl-tRNA(fMet). The formyl group appears to play a dual role in the initiator identity of N-formylmethionyl-tRNA by promoting its recognition by IF2 and preventing the misappropriation of this tRNA by the elongation apparatus.</text>
</comment>
<comment type="catalytic activity">
    <reaction evidence="1">
        <text>L-methionyl-tRNA(fMet) + (6R)-10-formyltetrahydrofolate = N-formyl-L-methionyl-tRNA(fMet) + (6S)-5,6,7,8-tetrahydrofolate + H(+)</text>
        <dbReference type="Rhea" id="RHEA:24380"/>
        <dbReference type="Rhea" id="RHEA-COMP:9952"/>
        <dbReference type="Rhea" id="RHEA-COMP:9953"/>
        <dbReference type="ChEBI" id="CHEBI:15378"/>
        <dbReference type="ChEBI" id="CHEBI:57453"/>
        <dbReference type="ChEBI" id="CHEBI:78530"/>
        <dbReference type="ChEBI" id="CHEBI:78844"/>
        <dbReference type="ChEBI" id="CHEBI:195366"/>
        <dbReference type="EC" id="2.1.2.9"/>
    </reaction>
</comment>
<comment type="similarity">
    <text evidence="1">Belongs to the Fmt family.</text>
</comment>
<organism>
    <name type="scientific">Burkholderia pseudomallei (strain 668)</name>
    <dbReference type="NCBI Taxonomy" id="320373"/>
    <lineage>
        <taxon>Bacteria</taxon>
        <taxon>Pseudomonadati</taxon>
        <taxon>Pseudomonadota</taxon>
        <taxon>Betaproteobacteria</taxon>
        <taxon>Burkholderiales</taxon>
        <taxon>Burkholderiaceae</taxon>
        <taxon>Burkholderia</taxon>
        <taxon>pseudomallei group</taxon>
    </lineage>
</organism>
<dbReference type="EC" id="2.1.2.9" evidence="1"/>
<dbReference type="EMBL" id="CP000570">
    <property type="protein sequence ID" value="ABN82128.1"/>
    <property type="molecule type" value="Genomic_DNA"/>
</dbReference>
<dbReference type="RefSeq" id="WP_004543102.1">
    <property type="nucleotide sequence ID" value="NC_009074.1"/>
</dbReference>
<dbReference type="SMR" id="A3N4D4"/>
<dbReference type="GeneID" id="93058625"/>
<dbReference type="KEGG" id="bpd:BURPS668_0151"/>
<dbReference type="HOGENOM" id="CLU_033347_1_2_4"/>
<dbReference type="GO" id="GO:0005829">
    <property type="term" value="C:cytosol"/>
    <property type="evidence" value="ECO:0007669"/>
    <property type="project" value="TreeGrafter"/>
</dbReference>
<dbReference type="GO" id="GO:0004479">
    <property type="term" value="F:methionyl-tRNA formyltransferase activity"/>
    <property type="evidence" value="ECO:0007669"/>
    <property type="project" value="UniProtKB-UniRule"/>
</dbReference>
<dbReference type="CDD" id="cd08646">
    <property type="entry name" value="FMT_core_Met-tRNA-FMT_N"/>
    <property type="match status" value="1"/>
</dbReference>
<dbReference type="CDD" id="cd08704">
    <property type="entry name" value="Met_tRNA_FMT_C"/>
    <property type="match status" value="1"/>
</dbReference>
<dbReference type="Gene3D" id="3.10.25.10">
    <property type="entry name" value="Formyl transferase, C-terminal domain"/>
    <property type="match status" value="1"/>
</dbReference>
<dbReference type="Gene3D" id="3.40.50.170">
    <property type="entry name" value="Formyl transferase, N-terminal domain"/>
    <property type="match status" value="1"/>
</dbReference>
<dbReference type="HAMAP" id="MF_00182">
    <property type="entry name" value="Formyl_trans"/>
    <property type="match status" value="1"/>
</dbReference>
<dbReference type="InterPro" id="IPR005794">
    <property type="entry name" value="Fmt"/>
</dbReference>
<dbReference type="InterPro" id="IPR005793">
    <property type="entry name" value="Formyl_trans_C"/>
</dbReference>
<dbReference type="InterPro" id="IPR037022">
    <property type="entry name" value="Formyl_trans_C_sf"/>
</dbReference>
<dbReference type="InterPro" id="IPR002376">
    <property type="entry name" value="Formyl_transf_N"/>
</dbReference>
<dbReference type="InterPro" id="IPR036477">
    <property type="entry name" value="Formyl_transf_N_sf"/>
</dbReference>
<dbReference type="InterPro" id="IPR011034">
    <property type="entry name" value="Formyl_transferase-like_C_sf"/>
</dbReference>
<dbReference type="InterPro" id="IPR001555">
    <property type="entry name" value="GART_AS"/>
</dbReference>
<dbReference type="InterPro" id="IPR044135">
    <property type="entry name" value="Met-tRNA-FMT_C"/>
</dbReference>
<dbReference type="InterPro" id="IPR041711">
    <property type="entry name" value="Met-tRNA-FMT_N"/>
</dbReference>
<dbReference type="NCBIfam" id="TIGR00460">
    <property type="entry name" value="fmt"/>
    <property type="match status" value="1"/>
</dbReference>
<dbReference type="PANTHER" id="PTHR11138">
    <property type="entry name" value="METHIONYL-TRNA FORMYLTRANSFERASE"/>
    <property type="match status" value="1"/>
</dbReference>
<dbReference type="PANTHER" id="PTHR11138:SF5">
    <property type="entry name" value="METHIONYL-TRNA FORMYLTRANSFERASE, MITOCHONDRIAL"/>
    <property type="match status" value="1"/>
</dbReference>
<dbReference type="Pfam" id="PF02911">
    <property type="entry name" value="Formyl_trans_C"/>
    <property type="match status" value="1"/>
</dbReference>
<dbReference type="Pfam" id="PF00551">
    <property type="entry name" value="Formyl_trans_N"/>
    <property type="match status" value="1"/>
</dbReference>
<dbReference type="SUPFAM" id="SSF50486">
    <property type="entry name" value="FMT C-terminal domain-like"/>
    <property type="match status" value="1"/>
</dbReference>
<dbReference type="SUPFAM" id="SSF53328">
    <property type="entry name" value="Formyltransferase"/>
    <property type="match status" value="1"/>
</dbReference>
<dbReference type="PROSITE" id="PS00373">
    <property type="entry name" value="GART"/>
    <property type="match status" value="1"/>
</dbReference>
<feature type="chain" id="PRO_1000020035" description="Methionyl-tRNA formyltransferase">
    <location>
        <begin position="1"/>
        <end position="327"/>
    </location>
</feature>
<feature type="binding site" evidence="1">
    <location>
        <begin position="121"/>
        <end position="124"/>
    </location>
    <ligand>
        <name>(6S)-5,6,7,8-tetrahydrofolate</name>
        <dbReference type="ChEBI" id="CHEBI:57453"/>
    </ligand>
</feature>
<keyword id="KW-0648">Protein biosynthesis</keyword>
<keyword id="KW-0808">Transferase</keyword>
<gene>
    <name evidence="1" type="primary">fmt</name>
    <name type="ordered locus">BURPS668_0151</name>
</gene>
<reference key="1">
    <citation type="journal article" date="2010" name="Genome Biol. Evol.">
        <title>Continuing evolution of Burkholderia mallei through genome reduction and large-scale rearrangements.</title>
        <authorList>
            <person name="Losada L."/>
            <person name="Ronning C.M."/>
            <person name="DeShazer D."/>
            <person name="Woods D."/>
            <person name="Fedorova N."/>
            <person name="Kim H.S."/>
            <person name="Shabalina S.A."/>
            <person name="Pearson T.R."/>
            <person name="Brinkac L."/>
            <person name="Tan P."/>
            <person name="Nandi T."/>
            <person name="Crabtree J."/>
            <person name="Badger J."/>
            <person name="Beckstrom-Sternberg S."/>
            <person name="Saqib M."/>
            <person name="Schutzer S.E."/>
            <person name="Keim P."/>
            <person name="Nierman W.C."/>
        </authorList>
    </citation>
    <scope>NUCLEOTIDE SEQUENCE [LARGE SCALE GENOMIC DNA]</scope>
    <source>
        <strain>668</strain>
    </source>
</reference>
<name>FMT_BURP6</name>